<organism>
    <name type="scientific">Artemia franciscana</name>
    <name type="common">Brine shrimp</name>
    <name type="synonym">Artemia sanfranciscana</name>
    <dbReference type="NCBI Taxonomy" id="6661"/>
    <lineage>
        <taxon>Eukaryota</taxon>
        <taxon>Metazoa</taxon>
        <taxon>Ecdysozoa</taxon>
        <taxon>Arthropoda</taxon>
        <taxon>Crustacea</taxon>
        <taxon>Branchiopoda</taxon>
        <taxon>Anostraca</taxon>
        <taxon>Artemiidae</taxon>
        <taxon>Artemia</taxon>
    </lineage>
</organism>
<keyword id="KW-0106">Calcium</keyword>
<keyword id="KW-0186">Copper</keyword>
<keyword id="KW-0249">Electron transport</keyword>
<keyword id="KW-0349">Heme</keyword>
<keyword id="KW-0408">Iron</keyword>
<keyword id="KW-0460">Magnesium</keyword>
<keyword id="KW-0472">Membrane</keyword>
<keyword id="KW-0479">Metal-binding</keyword>
<keyword id="KW-0496">Mitochondrion</keyword>
<keyword id="KW-0999">Mitochondrion inner membrane</keyword>
<keyword id="KW-0679">Respiratory chain</keyword>
<keyword id="KW-1278">Translocase</keyword>
<keyword id="KW-0812">Transmembrane</keyword>
<keyword id="KW-1133">Transmembrane helix</keyword>
<keyword id="KW-0813">Transport</keyword>
<gene>
    <name type="primary">COI</name>
    <name type="synonym">CO-I</name>
</gene>
<dbReference type="EC" id="7.1.1.9"/>
<dbReference type="EMBL" id="X69067">
    <property type="protein sequence ID" value="CAA48806.1"/>
    <property type="molecule type" value="Genomic_DNA"/>
</dbReference>
<dbReference type="PIR" id="S60622">
    <property type="entry name" value="S60622"/>
</dbReference>
<dbReference type="RefSeq" id="NP_007109.1">
    <property type="nucleotide sequence ID" value="NC_001620.1"/>
</dbReference>
<dbReference type="SMR" id="Q37705"/>
<dbReference type="KEGG" id="afra:807790"/>
<dbReference type="CTD" id="4512"/>
<dbReference type="UniPathway" id="UPA00705"/>
<dbReference type="GO" id="GO:0005743">
    <property type="term" value="C:mitochondrial inner membrane"/>
    <property type="evidence" value="ECO:0007669"/>
    <property type="project" value="UniProtKB-SubCell"/>
</dbReference>
<dbReference type="GO" id="GO:0045277">
    <property type="term" value="C:respiratory chain complex IV"/>
    <property type="evidence" value="ECO:0007669"/>
    <property type="project" value="InterPro"/>
</dbReference>
<dbReference type="GO" id="GO:0004129">
    <property type="term" value="F:cytochrome-c oxidase activity"/>
    <property type="evidence" value="ECO:0007669"/>
    <property type="project" value="UniProtKB-EC"/>
</dbReference>
<dbReference type="GO" id="GO:0020037">
    <property type="term" value="F:heme binding"/>
    <property type="evidence" value="ECO:0007669"/>
    <property type="project" value="InterPro"/>
</dbReference>
<dbReference type="GO" id="GO:0046872">
    <property type="term" value="F:metal ion binding"/>
    <property type="evidence" value="ECO:0007669"/>
    <property type="project" value="UniProtKB-KW"/>
</dbReference>
<dbReference type="GO" id="GO:0015990">
    <property type="term" value="P:electron transport coupled proton transport"/>
    <property type="evidence" value="ECO:0007669"/>
    <property type="project" value="TreeGrafter"/>
</dbReference>
<dbReference type="GO" id="GO:0006123">
    <property type="term" value="P:mitochondrial electron transport, cytochrome c to oxygen"/>
    <property type="evidence" value="ECO:0007669"/>
    <property type="project" value="TreeGrafter"/>
</dbReference>
<dbReference type="CDD" id="cd01663">
    <property type="entry name" value="Cyt_c_Oxidase_I"/>
    <property type="match status" value="1"/>
</dbReference>
<dbReference type="FunFam" id="1.20.210.10:FF:000001">
    <property type="entry name" value="Cytochrome c oxidase subunit 1"/>
    <property type="match status" value="1"/>
</dbReference>
<dbReference type="Gene3D" id="1.20.210.10">
    <property type="entry name" value="Cytochrome c oxidase-like, subunit I domain"/>
    <property type="match status" value="1"/>
</dbReference>
<dbReference type="InterPro" id="IPR023616">
    <property type="entry name" value="Cyt_c_oxase-like_su1_dom"/>
</dbReference>
<dbReference type="InterPro" id="IPR036927">
    <property type="entry name" value="Cyt_c_oxase-like_su1_sf"/>
</dbReference>
<dbReference type="InterPro" id="IPR000883">
    <property type="entry name" value="Cyt_C_Oxase_1"/>
</dbReference>
<dbReference type="InterPro" id="IPR023615">
    <property type="entry name" value="Cyt_c_Oxase_su1_BS"/>
</dbReference>
<dbReference type="InterPro" id="IPR033944">
    <property type="entry name" value="Cyt_c_oxase_su1_dom"/>
</dbReference>
<dbReference type="PANTHER" id="PTHR10422">
    <property type="entry name" value="CYTOCHROME C OXIDASE SUBUNIT 1"/>
    <property type="match status" value="1"/>
</dbReference>
<dbReference type="PANTHER" id="PTHR10422:SF18">
    <property type="entry name" value="CYTOCHROME C OXIDASE SUBUNIT 1"/>
    <property type="match status" value="1"/>
</dbReference>
<dbReference type="Pfam" id="PF00115">
    <property type="entry name" value="COX1"/>
    <property type="match status" value="1"/>
</dbReference>
<dbReference type="PRINTS" id="PR01165">
    <property type="entry name" value="CYCOXIDASEI"/>
</dbReference>
<dbReference type="SUPFAM" id="SSF81442">
    <property type="entry name" value="Cytochrome c oxidase subunit I-like"/>
    <property type="match status" value="1"/>
</dbReference>
<dbReference type="PROSITE" id="PS50855">
    <property type="entry name" value="COX1"/>
    <property type="match status" value="1"/>
</dbReference>
<dbReference type="PROSITE" id="PS00077">
    <property type="entry name" value="COX1_CUB"/>
    <property type="match status" value="1"/>
</dbReference>
<feature type="chain" id="PRO_0000183287" description="Cytochrome c oxidase subunit 1">
    <location>
        <begin position="1"/>
        <end position="512"/>
    </location>
</feature>
<feature type="transmembrane region" description="Helical" evidence="3">
    <location>
        <begin position="15"/>
        <end position="35"/>
    </location>
</feature>
<feature type="transmembrane region" description="Helical" evidence="3">
    <location>
        <begin position="54"/>
        <end position="74"/>
    </location>
</feature>
<feature type="transmembrane region" description="Helical" evidence="3">
    <location>
        <begin position="100"/>
        <end position="120"/>
    </location>
</feature>
<feature type="transmembrane region" description="Helical" evidence="3">
    <location>
        <begin position="143"/>
        <end position="163"/>
    </location>
</feature>
<feature type="transmembrane region" description="Helical" evidence="3">
    <location>
        <begin position="181"/>
        <end position="201"/>
    </location>
</feature>
<feature type="transmembrane region" description="Helical" evidence="3">
    <location>
        <begin position="232"/>
        <end position="252"/>
    </location>
</feature>
<feature type="transmembrane region" description="Helical" evidence="3">
    <location>
        <begin position="266"/>
        <end position="286"/>
    </location>
</feature>
<feature type="transmembrane region" description="Helical" evidence="3">
    <location>
        <begin position="303"/>
        <end position="323"/>
    </location>
</feature>
<feature type="transmembrane region" description="Helical" evidence="3">
    <location>
        <begin position="336"/>
        <end position="356"/>
    </location>
</feature>
<feature type="transmembrane region" description="Helical" evidence="3">
    <location>
        <begin position="378"/>
        <end position="398"/>
    </location>
</feature>
<feature type="transmembrane region" description="Helical" evidence="3">
    <location>
        <begin position="412"/>
        <end position="432"/>
    </location>
</feature>
<feature type="transmembrane region" description="Helical" evidence="3">
    <location>
        <begin position="450"/>
        <end position="470"/>
    </location>
</feature>
<feature type="binding site" evidence="2">
    <location>
        <position position="38"/>
    </location>
    <ligand>
        <name>Ca(2+)</name>
        <dbReference type="ChEBI" id="CHEBI:29108"/>
    </ligand>
</feature>
<feature type="binding site" evidence="2">
    <location>
        <position position="43"/>
    </location>
    <ligand>
        <name>Ca(2+)</name>
        <dbReference type="ChEBI" id="CHEBI:29108"/>
    </ligand>
</feature>
<feature type="binding site" description="axial binding residue" evidence="2">
    <location>
        <position position="59"/>
    </location>
    <ligand>
        <name>Fe(II)-heme a</name>
        <dbReference type="ChEBI" id="CHEBI:61715"/>
        <note>low-spin</note>
    </ligand>
    <ligandPart>
        <name>Fe</name>
        <dbReference type="ChEBI" id="CHEBI:18248"/>
    </ligandPart>
</feature>
<feature type="binding site" evidence="2">
    <location>
        <position position="238"/>
    </location>
    <ligand>
        <name>Cu cation</name>
        <dbReference type="ChEBI" id="CHEBI:23378"/>
        <label>B</label>
    </ligand>
</feature>
<feature type="binding site" evidence="1">
    <location>
        <position position="242"/>
    </location>
    <ligand>
        <name>O2</name>
        <dbReference type="ChEBI" id="CHEBI:15379"/>
    </ligand>
</feature>
<feature type="binding site" evidence="2">
    <location>
        <position position="288"/>
    </location>
    <ligand>
        <name>Cu cation</name>
        <dbReference type="ChEBI" id="CHEBI:23378"/>
        <label>B</label>
    </ligand>
</feature>
<feature type="binding site" evidence="2">
    <location>
        <position position="289"/>
    </location>
    <ligand>
        <name>Cu cation</name>
        <dbReference type="ChEBI" id="CHEBI:23378"/>
        <label>B</label>
    </ligand>
</feature>
<feature type="binding site" evidence="2">
    <location>
        <position position="366"/>
    </location>
    <ligand>
        <name>Mg(2+)</name>
        <dbReference type="ChEBI" id="CHEBI:18420"/>
        <note>ligand shared with subunit 2</note>
    </ligand>
</feature>
<feature type="binding site" evidence="2">
    <location>
        <position position="367"/>
    </location>
    <ligand>
        <name>Mg(2+)</name>
        <dbReference type="ChEBI" id="CHEBI:18420"/>
        <note>ligand shared with subunit 2</note>
    </ligand>
</feature>
<feature type="binding site" description="axial binding residue" evidence="2">
    <location>
        <position position="374"/>
    </location>
    <ligand>
        <name>heme a3</name>
        <dbReference type="ChEBI" id="CHEBI:83282"/>
        <note>high-spin</note>
    </ligand>
    <ligandPart>
        <name>Fe</name>
        <dbReference type="ChEBI" id="CHEBI:18248"/>
    </ligandPart>
</feature>
<feature type="binding site" description="axial binding residue" evidence="2">
    <location>
        <position position="376"/>
    </location>
    <ligand>
        <name>Fe(II)-heme a</name>
        <dbReference type="ChEBI" id="CHEBI:61715"/>
        <note>low-spin</note>
    </ligand>
    <ligandPart>
        <name>Fe</name>
        <dbReference type="ChEBI" id="CHEBI:18248"/>
    </ligandPart>
</feature>
<feature type="cross-link" description="1'-histidyl-3'-tyrosine (His-Tyr)" evidence="2">
    <location>
        <begin position="238"/>
        <end position="242"/>
    </location>
</feature>
<reference key="1">
    <citation type="journal article" date="1994" name="J. Mol. Evol.">
        <title>Speciation in the Artemia genus: mitochondrial DNA analysis of bisexual and parthenogenetic brine shrimps.</title>
        <authorList>
            <person name="Perez M.L."/>
            <person name="Valverde J.R."/>
            <person name="Batuecas B."/>
            <person name="Amat F."/>
            <person name="Marco R."/>
            <person name="Garesse R."/>
        </authorList>
    </citation>
    <scope>NUCLEOTIDE SEQUENCE [GENOMIC DNA]</scope>
</reference>
<comment type="function">
    <text evidence="2">Component of the cytochrome c oxidase, the last enzyme in the mitochondrial electron transport chain which drives oxidative phosphorylation. The respiratory chain contains 3 multisubunit complexes succinate dehydrogenase (complex II, CII), ubiquinol-cytochrome c oxidoreductase (cytochrome b-c1 complex, complex III, CIII) and cytochrome c oxidase (complex IV, CIV), that cooperate to transfer electrons derived from NADH and succinate to molecular oxygen, creating an electrochemical gradient over the inner membrane that drives transmembrane transport and the ATP synthase. Cytochrome c oxidase is the component of the respiratory chain that catalyzes the reduction of oxygen to water. Electrons originating from reduced cytochrome c in the intermembrane space (IMS) are transferred via the dinuclear copper A center (CU(A)) of subunit 2 and heme A of subunit 1 to the active site in subunit 1, a binuclear center (BNC) formed by heme A3 and copper B (CU(B)). The BNC reduces molecular oxygen to 2 water molecules using 4 electrons from cytochrome c in the IMS and 4 protons from the mitochondrial matrix.</text>
</comment>
<comment type="catalytic activity">
    <reaction evidence="2">
        <text>4 Fe(II)-[cytochrome c] + O2 + 8 H(+)(in) = 4 Fe(III)-[cytochrome c] + 2 H2O + 4 H(+)(out)</text>
        <dbReference type="Rhea" id="RHEA:11436"/>
        <dbReference type="Rhea" id="RHEA-COMP:10350"/>
        <dbReference type="Rhea" id="RHEA-COMP:14399"/>
        <dbReference type="ChEBI" id="CHEBI:15377"/>
        <dbReference type="ChEBI" id="CHEBI:15378"/>
        <dbReference type="ChEBI" id="CHEBI:15379"/>
        <dbReference type="ChEBI" id="CHEBI:29033"/>
        <dbReference type="ChEBI" id="CHEBI:29034"/>
        <dbReference type="EC" id="7.1.1.9"/>
    </reaction>
    <physiologicalReaction direction="left-to-right" evidence="2">
        <dbReference type="Rhea" id="RHEA:11437"/>
    </physiologicalReaction>
</comment>
<comment type="cofactor">
    <cofactor evidence="2">
        <name>heme</name>
        <dbReference type="ChEBI" id="CHEBI:30413"/>
    </cofactor>
    <text evidence="2">Binds 2 heme A groups non-covalently per subunit.</text>
</comment>
<comment type="cofactor">
    <cofactor evidence="2">
        <name>Cu cation</name>
        <dbReference type="ChEBI" id="CHEBI:23378"/>
    </cofactor>
    <text evidence="2">Binds a copper B center.</text>
</comment>
<comment type="pathway">
    <text evidence="2">Energy metabolism; oxidative phosphorylation.</text>
</comment>
<comment type="subunit">
    <text evidence="2">Component of the cytochrome c oxidase (complex IV, CIV), a multisubunit enzyme composed of a catalytic core of 3 subunits and several supernumerary subunits. The complex exists as a monomer or a dimer and forms supercomplexes (SCs) in the inner mitochondrial membrane with ubiquinol-cytochrome c oxidoreductase (cytochrome b-c1 complex, complex III, CIII).</text>
</comment>
<comment type="subcellular location">
    <subcellularLocation>
        <location evidence="2">Mitochondrion inner membrane</location>
        <topology evidence="2">Multi-pass membrane protein</topology>
    </subcellularLocation>
</comment>
<comment type="similarity">
    <text evidence="4">Belongs to the heme-copper respiratory oxidase family.</text>
</comment>
<geneLocation type="mitochondrion"/>
<protein>
    <recommendedName>
        <fullName>Cytochrome c oxidase subunit 1</fullName>
        <ecNumber>7.1.1.9</ecNumber>
    </recommendedName>
    <alternativeName>
        <fullName>Cytochrome c oxidase polypeptide I</fullName>
    </alternativeName>
</protein>
<name>COX1_ARTSF</name>
<proteinExistence type="inferred from homology"/>
<sequence>MQRWFYSTNHKDIGTLYFIFGAWAGMVGTSLSMLIRAELGQPGSLIGDEQVYNVIVTAHAFIMIFFMVMPILIGGFGNWLVPIMLGAPDMAFPRLNNLSFWMLPPSLTLLLASSMVESGAGTGWTVYPPLSSAIAHAGPSVDLAIFSLHLAGVSSILGAVNFITTIINMRPQSMSIDRMPLFVWAVGITAVLLLLSLPVLAGAITMLLTDRNLNTSFFDPAGGGDPILYQHLFWFFGHPEVYILILPGFGMVSHIISQESGKKEAFGTLGMIYAMLAIGILGFVVWAHHMFTVGMDVDTRAYFTAATMIIAIPTGIKIFSWIGTLHGTRLTMTPSMLWALGFVFLFTVGGLTGVVLSNSSIDIVLHDTYYVVAHFHYVLSMGAVFAIMAGFVHWFPLMTGLSMNQFLLKVHFFIMFLGVNLTFFPQHFLGLAGMPRRYADYPDTYASWNVISSLGSVMSMIATLMFIFCIWEAMIAKRINIFSLNLSSSVEWNHPHPPADHSYEEITMISTF</sequence>
<accession>Q37705</accession>
<evidence type="ECO:0000250" key="1">
    <source>
        <dbReference type="UniProtKB" id="P00396"/>
    </source>
</evidence>
<evidence type="ECO:0000250" key="2">
    <source>
        <dbReference type="UniProtKB" id="P00401"/>
    </source>
</evidence>
<evidence type="ECO:0000255" key="3"/>
<evidence type="ECO:0000305" key="4"/>